<name>Y1217_FLAJ1</name>
<feature type="chain" id="PRO_1000074814" description="UPF0102 protein Fjoh_1217">
    <location>
        <begin position="1"/>
        <end position="123"/>
    </location>
</feature>
<evidence type="ECO:0000255" key="1">
    <source>
        <dbReference type="HAMAP-Rule" id="MF_00048"/>
    </source>
</evidence>
<reference key="1">
    <citation type="journal article" date="2009" name="Appl. Environ. Microbiol.">
        <title>Novel features of the polysaccharide-digesting gliding bacterium Flavobacterium johnsoniae as revealed by genome sequence analysis.</title>
        <authorList>
            <person name="McBride M.J."/>
            <person name="Xie G."/>
            <person name="Martens E.C."/>
            <person name="Lapidus A."/>
            <person name="Henrissat B."/>
            <person name="Rhodes R.G."/>
            <person name="Goltsman E."/>
            <person name="Wang W."/>
            <person name="Xu J."/>
            <person name="Hunnicutt D.W."/>
            <person name="Staroscik A.M."/>
            <person name="Hoover T.R."/>
            <person name="Cheng Y.Q."/>
            <person name="Stein J.L."/>
        </authorList>
    </citation>
    <scope>NUCLEOTIDE SEQUENCE [LARGE SCALE GENOMIC DNA]</scope>
    <source>
        <strain>ATCC 17061 / DSM 2064 / JCM 8514 / BCRC 14874 / CCUG 350202 / NBRC 14942 / NCIMB 11054 / UW101</strain>
    </source>
</reference>
<protein>
    <recommendedName>
        <fullName evidence="1">UPF0102 protein Fjoh_1217</fullName>
    </recommendedName>
</protein>
<accession>A5FKL6</accession>
<organism>
    <name type="scientific">Flavobacterium johnsoniae (strain ATCC 17061 / DSM 2064 / JCM 8514 / BCRC 14874 / CCUG 350202 / NBRC 14942 / NCIMB 11054 / UW101)</name>
    <name type="common">Cytophaga johnsonae</name>
    <dbReference type="NCBI Taxonomy" id="376686"/>
    <lineage>
        <taxon>Bacteria</taxon>
        <taxon>Pseudomonadati</taxon>
        <taxon>Bacteroidota</taxon>
        <taxon>Flavobacteriia</taxon>
        <taxon>Flavobacteriales</taxon>
        <taxon>Flavobacteriaceae</taxon>
        <taxon>Flavobacterium</taxon>
    </lineage>
</organism>
<gene>
    <name type="ordered locus">Fjoh_1217</name>
</gene>
<proteinExistence type="inferred from homology"/>
<dbReference type="EMBL" id="CP000685">
    <property type="protein sequence ID" value="ABQ04249.1"/>
    <property type="molecule type" value="Genomic_DNA"/>
</dbReference>
<dbReference type="RefSeq" id="WP_012023299.1">
    <property type="nucleotide sequence ID" value="NC_009441.1"/>
</dbReference>
<dbReference type="SMR" id="A5FKL6"/>
<dbReference type="STRING" id="376686.Fjoh_1217"/>
<dbReference type="KEGG" id="fjo:Fjoh_1217"/>
<dbReference type="eggNOG" id="COG0792">
    <property type="taxonomic scope" value="Bacteria"/>
</dbReference>
<dbReference type="HOGENOM" id="CLU_115353_2_1_10"/>
<dbReference type="OrthoDB" id="9802516at2"/>
<dbReference type="Proteomes" id="UP000006694">
    <property type="component" value="Chromosome"/>
</dbReference>
<dbReference type="GO" id="GO:0003676">
    <property type="term" value="F:nucleic acid binding"/>
    <property type="evidence" value="ECO:0007669"/>
    <property type="project" value="InterPro"/>
</dbReference>
<dbReference type="CDD" id="cd20736">
    <property type="entry name" value="PoNe_Nuclease"/>
    <property type="match status" value="1"/>
</dbReference>
<dbReference type="Gene3D" id="3.40.1350.10">
    <property type="match status" value="1"/>
</dbReference>
<dbReference type="HAMAP" id="MF_00048">
    <property type="entry name" value="UPF0102"/>
    <property type="match status" value="1"/>
</dbReference>
<dbReference type="InterPro" id="IPR011335">
    <property type="entry name" value="Restrct_endonuc-II-like"/>
</dbReference>
<dbReference type="InterPro" id="IPR011856">
    <property type="entry name" value="tRNA_endonuc-like_dom_sf"/>
</dbReference>
<dbReference type="InterPro" id="IPR003509">
    <property type="entry name" value="UPF0102_YraN-like"/>
</dbReference>
<dbReference type="NCBIfam" id="NF009150">
    <property type="entry name" value="PRK12497.1-3"/>
    <property type="match status" value="1"/>
</dbReference>
<dbReference type="PANTHER" id="PTHR34039">
    <property type="entry name" value="UPF0102 PROTEIN YRAN"/>
    <property type="match status" value="1"/>
</dbReference>
<dbReference type="PANTHER" id="PTHR34039:SF1">
    <property type="entry name" value="UPF0102 PROTEIN YRAN"/>
    <property type="match status" value="1"/>
</dbReference>
<dbReference type="Pfam" id="PF02021">
    <property type="entry name" value="UPF0102"/>
    <property type="match status" value="1"/>
</dbReference>
<dbReference type="SUPFAM" id="SSF52980">
    <property type="entry name" value="Restriction endonuclease-like"/>
    <property type="match status" value="1"/>
</dbReference>
<sequence>MAEHNELGKLGEDLAAEHLEKENYKILERNWVYKNAEVDILAQKENILVVVEVKTRSSLDFGSPQDFVKPKKIQLLIKAVNAYINYREKDFEEDINVRFDIVAIHKNGESFAIEHLTDAFYHF</sequence>
<comment type="similarity">
    <text evidence="1">Belongs to the UPF0102 family.</text>
</comment>